<dbReference type="EC" id="3.1.-.-" evidence="1 4"/>
<dbReference type="EMBL" id="Y14078">
    <property type="protein sequence ID" value="CAA74420.1"/>
    <property type="molecule type" value="Genomic_DNA"/>
</dbReference>
<dbReference type="EMBL" id="AL009126">
    <property type="protein sequence ID" value="CAB12833.1"/>
    <property type="molecule type" value="Genomic_DNA"/>
</dbReference>
<dbReference type="PIR" id="G69818">
    <property type="entry name" value="G69818"/>
</dbReference>
<dbReference type="RefSeq" id="NP_388874.1">
    <property type="nucleotide sequence ID" value="NC_000964.3"/>
</dbReference>
<dbReference type="RefSeq" id="WP_003245698.1">
    <property type="nucleotide sequence ID" value="NZ_OZ025638.1"/>
</dbReference>
<dbReference type="SMR" id="O07521"/>
<dbReference type="FunCoup" id="O07521">
    <property type="interactions" value="5"/>
</dbReference>
<dbReference type="IntAct" id="O07521">
    <property type="interactions" value="4"/>
</dbReference>
<dbReference type="STRING" id="224308.BSU09930"/>
<dbReference type="jPOST" id="O07521"/>
<dbReference type="PaxDb" id="224308-BSU09930"/>
<dbReference type="DNASU" id="939762"/>
<dbReference type="EnsemblBacteria" id="CAB12833">
    <property type="protein sequence ID" value="CAB12833"/>
    <property type="gene ID" value="BSU_09930"/>
</dbReference>
<dbReference type="GeneID" id="939762"/>
<dbReference type="KEGG" id="bsu:BSU09930"/>
<dbReference type="PATRIC" id="fig|224308.179.peg.1066"/>
<dbReference type="eggNOG" id="COG3481">
    <property type="taxonomic scope" value="Bacteria"/>
</dbReference>
<dbReference type="InParanoid" id="O07521"/>
<dbReference type="OrthoDB" id="9778453at2"/>
<dbReference type="PhylomeDB" id="O07521"/>
<dbReference type="BioCyc" id="BSUB:BSU09930-MONOMER"/>
<dbReference type="Proteomes" id="UP000001570">
    <property type="component" value="Chromosome"/>
</dbReference>
<dbReference type="GO" id="GO:0000175">
    <property type="term" value="F:3'-5'-RNA exonuclease activity"/>
    <property type="evidence" value="ECO:0007669"/>
    <property type="project" value="UniProtKB-UniRule"/>
</dbReference>
<dbReference type="GO" id="GO:0003677">
    <property type="term" value="F:DNA binding"/>
    <property type="evidence" value="ECO:0007669"/>
    <property type="project" value="UniProtKB-KW"/>
</dbReference>
<dbReference type="GO" id="GO:0031125">
    <property type="term" value="P:rRNA 3'-end processing"/>
    <property type="evidence" value="ECO:0000315"/>
    <property type="project" value="UniProtKB"/>
</dbReference>
<dbReference type="CDD" id="cd00077">
    <property type="entry name" value="HDc"/>
    <property type="match status" value="1"/>
</dbReference>
<dbReference type="CDD" id="cd04492">
    <property type="entry name" value="YhaM_OBF_like"/>
    <property type="match status" value="1"/>
</dbReference>
<dbReference type="FunFam" id="1.10.3210.10:FF:000008">
    <property type="entry name" value="3'-5' exoribonuclease YhaM"/>
    <property type="match status" value="1"/>
</dbReference>
<dbReference type="Gene3D" id="1.10.3210.10">
    <property type="entry name" value="Hypothetical protein af1432"/>
    <property type="match status" value="1"/>
</dbReference>
<dbReference type="Gene3D" id="2.40.50.140">
    <property type="entry name" value="Nucleic acid-binding proteins"/>
    <property type="match status" value="1"/>
</dbReference>
<dbReference type="HAMAP" id="MF_01427">
    <property type="entry name" value="3_5_Exoribonuc_YhaM"/>
    <property type="match status" value="1"/>
</dbReference>
<dbReference type="InterPro" id="IPR020873">
    <property type="entry name" value="3'-5'_exoribonuclease_YhaM"/>
</dbReference>
<dbReference type="InterPro" id="IPR003607">
    <property type="entry name" value="HD/PDEase_dom"/>
</dbReference>
<dbReference type="InterPro" id="IPR006674">
    <property type="entry name" value="HD_domain"/>
</dbReference>
<dbReference type="InterPro" id="IPR012340">
    <property type="entry name" value="NA-bd_OB-fold"/>
</dbReference>
<dbReference type="InterPro" id="IPR050798">
    <property type="entry name" value="YhaM_exoribonuc/phosphodiest"/>
</dbReference>
<dbReference type="NCBIfam" id="NF010007">
    <property type="entry name" value="PRK13480.1"/>
    <property type="match status" value="1"/>
</dbReference>
<dbReference type="PANTHER" id="PTHR37294">
    <property type="entry name" value="3'-5' EXORIBONUCLEASE YHAM"/>
    <property type="match status" value="1"/>
</dbReference>
<dbReference type="PANTHER" id="PTHR37294:SF1">
    <property type="entry name" value="3'-5' EXORIBONUCLEASE YHAM"/>
    <property type="match status" value="1"/>
</dbReference>
<dbReference type="Pfam" id="PF01966">
    <property type="entry name" value="HD"/>
    <property type="match status" value="1"/>
</dbReference>
<dbReference type="SMART" id="SM00471">
    <property type="entry name" value="HDc"/>
    <property type="match status" value="1"/>
</dbReference>
<dbReference type="SUPFAM" id="SSF109604">
    <property type="entry name" value="HD-domain/PDEase-like"/>
    <property type="match status" value="1"/>
</dbReference>
<dbReference type="SUPFAM" id="SSF50249">
    <property type="entry name" value="Nucleic acid-binding proteins"/>
    <property type="match status" value="1"/>
</dbReference>
<dbReference type="PROSITE" id="PS51831">
    <property type="entry name" value="HD"/>
    <property type="match status" value="1"/>
</dbReference>
<name>YHAM_BACSU</name>
<accession>O07521</accession>
<accession>Q796V2</accession>
<reference key="1">
    <citation type="journal article" date="1998" name="Microbiology">
        <title>The 172 kb prkA-addAB region from 83 degrees to 97 degrees of the Bacillus subtilis chromosome contains several dysfunctional genes, the glyB marker, many genes encoding transporter proteins, and the ubiquitous hit gene.</title>
        <authorList>
            <person name="Noback M.A."/>
            <person name="Holsappel S."/>
            <person name="Kiewiet R."/>
            <person name="Terpstra P."/>
            <person name="Wambutt R."/>
            <person name="Wedler H."/>
            <person name="Venema G."/>
            <person name="Bron S."/>
        </authorList>
    </citation>
    <scope>NUCLEOTIDE SEQUENCE [GENOMIC DNA]</scope>
    <source>
        <strain>168</strain>
    </source>
</reference>
<reference key="2">
    <citation type="journal article" date="1997" name="Nature">
        <title>The complete genome sequence of the Gram-positive bacterium Bacillus subtilis.</title>
        <authorList>
            <person name="Kunst F."/>
            <person name="Ogasawara N."/>
            <person name="Moszer I."/>
            <person name="Albertini A.M."/>
            <person name="Alloni G."/>
            <person name="Azevedo V."/>
            <person name="Bertero M.G."/>
            <person name="Bessieres P."/>
            <person name="Bolotin A."/>
            <person name="Borchert S."/>
            <person name="Borriss R."/>
            <person name="Boursier L."/>
            <person name="Brans A."/>
            <person name="Braun M."/>
            <person name="Brignell S.C."/>
            <person name="Bron S."/>
            <person name="Brouillet S."/>
            <person name="Bruschi C.V."/>
            <person name="Caldwell B."/>
            <person name="Capuano V."/>
            <person name="Carter N.M."/>
            <person name="Choi S.-K."/>
            <person name="Codani J.-J."/>
            <person name="Connerton I.F."/>
            <person name="Cummings N.J."/>
            <person name="Daniel R.A."/>
            <person name="Denizot F."/>
            <person name="Devine K.M."/>
            <person name="Duesterhoeft A."/>
            <person name="Ehrlich S.D."/>
            <person name="Emmerson P.T."/>
            <person name="Entian K.-D."/>
            <person name="Errington J."/>
            <person name="Fabret C."/>
            <person name="Ferrari E."/>
            <person name="Foulger D."/>
            <person name="Fritz C."/>
            <person name="Fujita M."/>
            <person name="Fujita Y."/>
            <person name="Fuma S."/>
            <person name="Galizzi A."/>
            <person name="Galleron N."/>
            <person name="Ghim S.-Y."/>
            <person name="Glaser P."/>
            <person name="Goffeau A."/>
            <person name="Golightly E.J."/>
            <person name="Grandi G."/>
            <person name="Guiseppi G."/>
            <person name="Guy B.J."/>
            <person name="Haga K."/>
            <person name="Haiech J."/>
            <person name="Harwood C.R."/>
            <person name="Henaut A."/>
            <person name="Hilbert H."/>
            <person name="Holsappel S."/>
            <person name="Hosono S."/>
            <person name="Hullo M.-F."/>
            <person name="Itaya M."/>
            <person name="Jones L.-M."/>
            <person name="Joris B."/>
            <person name="Karamata D."/>
            <person name="Kasahara Y."/>
            <person name="Klaerr-Blanchard M."/>
            <person name="Klein C."/>
            <person name="Kobayashi Y."/>
            <person name="Koetter P."/>
            <person name="Koningstein G."/>
            <person name="Krogh S."/>
            <person name="Kumano M."/>
            <person name="Kurita K."/>
            <person name="Lapidus A."/>
            <person name="Lardinois S."/>
            <person name="Lauber J."/>
            <person name="Lazarevic V."/>
            <person name="Lee S.-M."/>
            <person name="Levine A."/>
            <person name="Liu H."/>
            <person name="Masuda S."/>
            <person name="Mauel C."/>
            <person name="Medigue C."/>
            <person name="Medina N."/>
            <person name="Mellado R.P."/>
            <person name="Mizuno M."/>
            <person name="Moestl D."/>
            <person name="Nakai S."/>
            <person name="Noback M."/>
            <person name="Noone D."/>
            <person name="O'Reilly M."/>
            <person name="Ogawa K."/>
            <person name="Ogiwara A."/>
            <person name="Oudega B."/>
            <person name="Park S.-H."/>
            <person name="Parro V."/>
            <person name="Pohl T.M."/>
            <person name="Portetelle D."/>
            <person name="Porwollik S."/>
            <person name="Prescott A.M."/>
            <person name="Presecan E."/>
            <person name="Pujic P."/>
            <person name="Purnelle B."/>
            <person name="Rapoport G."/>
            <person name="Rey M."/>
            <person name="Reynolds S."/>
            <person name="Rieger M."/>
            <person name="Rivolta C."/>
            <person name="Rocha E."/>
            <person name="Roche B."/>
            <person name="Rose M."/>
            <person name="Sadaie Y."/>
            <person name="Sato T."/>
            <person name="Scanlan E."/>
            <person name="Schleich S."/>
            <person name="Schroeter R."/>
            <person name="Scoffone F."/>
            <person name="Sekiguchi J."/>
            <person name="Sekowska A."/>
            <person name="Seror S.J."/>
            <person name="Serror P."/>
            <person name="Shin B.-S."/>
            <person name="Soldo B."/>
            <person name="Sorokin A."/>
            <person name="Tacconi E."/>
            <person name="Takagi T."/>
            <person name="Takahashi H."/>
            <person name="Takemaru K."/>
            <person name="Takeuchi M."/>
            <person name="Tamakoshi A."/>
            <person name="Tanaka T."/>
            <person name="Terpstra P."/>
            <person name="Tognoni A."/>
            <person name="Tosato V."/>
            <person name="Uchiyama S."/>
            <person name="Vandenbol M."/>
            <person name="Vannier F."/>
            <person name="Vassarotti A."/>
            <person name="Viari A."/>
            <person name="Wambutt R."/>
            <person name="Wedler E."/>
            <person name="Wedler H."/>
            <person name="Weitzenegger T."/>
            <person name="Winters P."/>
            <person name="Wipat A."/>
            <person name="Yamamoto H."/>
            <person name="Yamane K."/>
            <person name="Yasumoto K."/>
            <person name="Yata K."/>
            <person name="Yoshida K."/>
            <person name="Yoshikawa H.-F."/>
            <person name="Zumstein E."/>
            <person name="Yoshikawa H."/>
            <person name="Danchin A."/>
        </authorList>
    </citation>
    <scope>NUCLEOTIDE SEQUENCE [LARGE SCALE GENOMIC DNA]</scope>
    <source>
        <strain>168</strain>
    </source>
</reference>
<reference key="3">
    <citation type="journal article" date="2002" name="J. Bacteriol.">
        <title>Bacillus subtilis YhaM, a member of a new family of 3'-to-5' exonucleases in Gram-positive bacteria.</title>
        <authorList>
            <person name="Oussenko I.A."/>
            <person name="Sanchez R."/>
            <person name="Bechhofer D.H."/>
        </authorList>
    </citation>
    <scope>FUNCTION</scope>
    <scope>CATALYTIC ACTIVITY</scope>
    <scope>COFACTOR</scope>
    <scope>DOMAIN</scope>
    <scope>DISRUPTION PHENOTYPE</scope>
    <source>
        <strain>BG1</strain>
    </source>
</reference>
<reference key="4">
    <citation type="journal article" date="2002" name="Proc. Natl. Acad. Sci. U.S.A.">
        <title>An expanded view of bacterial DNA replication.</title>
        <authorList>
            <person name="Noirot-Gros M.-F."/>
            <person name="Dervyn E."/>
            <person name="Wu L.J."/>
            <person name="Mervelet P."/>
            <person name="Errington J."/>
            <person name="Ehrlich S.D."/>
            <person name="Noirot P."/>
        </authorList>
    </citation>
    <scope>DISRUPTION PHENOTYPE</scope>
    <source>
        <strain>168</strain>
    </source>
</reference>
<reference key="5">
    <citation type="journal article" date="2005" name="J. Bacteriol.">
        <title>Genetic composition of the Bacillus subtilis SOS system.</title>
        <authorList>
            <person name="Au N."/>
            <person name="Kuester-Schoeck E."/>
            <person name="Mandava V."/>
            <person name="Bothwell L.E."/>
            <person name="Canny S.P."/>
            <person name="Chachu K."/>
            <person name="Colavito S.A."/>
            <person name="Fuller S.N."/>
            <person name="Groban E.S."/>
            <person name="Hensley L.A."/>
            <person name="O'Brien T.C."/>
            <person name="Shah A."/>
            <person name="Tierney J.T."/>
            <person name="Tomm L.L."/>
            <person name="O'Gara T.M."/>
            <person name="Goranov A.I."/>
            <person name="Grossman A.D."/>
            <person name="Lovett C.M."/>
        </authorList>
    </citation>
    <scope>INDUCTION BY MITOMYCIN C AND UV</scope>
    <scope>PROBABLE OPERON STRUCTURE</scope>
    <source>
        <strain>168 / YB886 / BG214</strain>
    </source>
</reference>
<reference key="6">
    <citation type="journal article" date="2010" name="J. Bacteriol.">
        <title>Maturation of 23S rRNA in Bacillus subtilis in the absence of Mini-III.</title>
        <authorList>
            <person name="Redko Y."/>
            <person name="Condon C."/>
        </authorList>
    </citation>
    <scope>FUNCTION IN 23S RRNA PROCESSING</scope>
    <scope>RNASE ACTIVITY</scope>
    <scope>DISRUPTION PHENOTYPE</scope>
</reference>
<sequence>MAKGIMLHEVGEQVDQYLLIKSSTKGIASNGKPFLTLMLQDQSGDIEAKLWDAKQSDEVTYAPQTIVKVVGDVHHYRGRTQLKLRNIRPVSEQENVNIDDFLETAPIPKNEMMDTITQYIFEMKNPNIQRITRFLVKKHEAEFMDYPAATKNHHEFVSGLAYHVVSMLNLAKAIADLYPSLDRDLLYAGVILHDLGKVKELSGPVSTSYTVEGNLLGHISIMVTELSKAAEELQIDSEEVLILQHLILSHHGKAEWGSPKPPMVKEAEILHYIDNLDAKMNMMDRALERVKPGEYTERVFALENRSFYKPTFHK</sequence>
<organism>
    <name type="scientific">Bacillus subtilis (strain 168)</name>
    <dbReference type="NCBI Taxonomy" id="224308"/>
    <lineage>
        <taxon>Bacteria</taxon>
        <taxon>Bacillati</taxon>
        <taxon>Bacillota</taxon>
        <taxon>Bacilli</taxon>
        <taxon>Bacillales</taxon>
        <taxon>Bacillaceae</taxon>
        <taxon>Bacillus</taxon>
    </lineage>
</organism>
<feature type="chain" id="PRO_0000109861" description="3'-5' exoribonuclease YhaM">
    <location>
        <begin position="1"/>
        <end position="314"/>
    </location>
</feature>
<feature type="domain" description="HD" evidence="2">
    <location>
        <begin position="163"/>
        <end position="279"/>
    </location>
</feature>
<feature type="DNA-binding region" description="OB" evidence="8">
    <location>
        <begin position="22"/>
        <end position="90"/>
    </location>
</feature>
<keyword id="KW-0170">Cobalt</keyword>
<keyword id="KW-0238">DNA-binding</keyword>
<keyword id="KW-0269">Exonuclease</keyword>
<keyword id="KW-0378">Hydrolase</keyword>
<keyword id="KW-0464">Manganese</keyword>
<keyword id="KW-0540">Nuclease</keyword>
<keyword id="KW-1185">Reference proteome</keyword>
<keyword id="KW-0698">rRNA processing</keyword>
<evidence type="ECO:0000255" key="1">
    <source>
        <dbReference type="HAMAP-Rule" id="MF_01427"/>
    </source>
</evidence>
<evidence type="ECO:0000255" key="2">
    <source>
        <dbReference type="PROSITE-ProRule" id="PRU01175"/>
    </source>
</evidence>
<evidence type="ECO:0000269" key="3">
    <source>
    </source>
</evidence>
<evidence type="ECO:0000269" key="4">
    <source>
    </source>
</evidence>
<evidence type="ECO:0000269" key="5">
    <source>
    </source>
</evidence>
<evidence type="ECO:0000269" key="6">
    <source>
    </source>
</evidence>
<evidence type="ECO:0000303" key="7">
    <source>
    </source>
</evidence>
<evidence type="ECO:0000305" key="8">
    <source>
    </source>
</evidence>
<gene>
    <name evidence="1 7" type="primary">yhaM</name>
    <name type="ordered locus">BSU09930</name>
</gene>
<proteinExistence type="evidence at protein level"/>
<protein>
    <recommendedName>
        <fullName evidence="1">3'-5' exoribonuclease YhaM</fullName>
        <ecNumber evidence="1 4">3.1.-.-</ecNumber>
    </recommendedName>
</protein>
<comment type="function">
    <text evidence="4 6">Shows a 3'-5' exoribonuclease activity as well as single-stranded DNA 3'-5'exonuclease activity (PubMed:12399495). Plays a role in the secondary pathway of 23S rRNA 3' end maturation (PubMed:19880604).</text>
</comment>
<comment type="cofactor">
    <cofactor evidence="4">
        <name>Mn(2+)</name>
        <dbReference type="ChEBI" id="CHEBI:29035"/>
    </cofactor>
    <cofactor evidence="4">
        <name>Co(2+)</name>
        <dbReference type="ChEBI" id="CHEBI:48828"/>
    </cofactor>
</comment>
<comment type="induction">
    <text evidence="5">By mitomycin C and UV irradiation which requires RecA; probably a member of the yhaONM operon.</text>
</comment>
<comment type="disruption phenotype">
    <text evidence="3 4 6">Non-essential, it can be disrupted (PubMed:12399495, PubMed:12060778). Correct processing of the 3' end of 23S rRNA no longer occurs in the absence of mrnC.</text>
</comment>
<comment type="similarity">
    <text evidence="1">Belongs to the YhaM family.</text>
</comment>